<gene>
    <name evidence="1" type="primary">smpB</name>
    <name type="ordered locus">PM0217</name>
</gene>
<name>SSRP_PASMU</name>
<protein>
    <recommendedName>
        <fullName evidence="1">SsrA-binding protein</fullName>
    </recommendedName>
    <alternativeName>
        <fullName evidence="1">Small protein B</fullName>
    </alternativeName>
</protein>
<feature type="chain" id="PRO_0000103000" description="SsrA-binding protein">
    <location>
        <begin position="1"/>
        <end position="160"/>
    </location>
</feature>
<comment type="function">
    <text evidence="1">Required for rescue of stalled ribosomes mediated by trans-translation. Binds to transfer-messenger RNA (tmRNA), required for stable association of tmRNA with ribosomes. tmRNA and SmpB together mimic tRNA shape, replacing the anticodon stem-loop with SmpB. tmRNA is encoded by the ssrA gene; the 2 termini fold to resemble tRNA(Ala) and it encodes a 'tag peptide', a short internal open reading frame. During trans-translation Ala-aminoacylated tmRNA acts like a tRNA, entering the A-site of stalled ribosomes, displacing the stalled mRNA. The ribosome then switches to translate the ORF on the tmRNA; the nascent peptide is terminated with the 'tag peptide' encoded by the tmRNA and targeted for degradation. The ribosome is freed to recommence translation, which seems to be the essential function of trans-translation.</text>
</comment>
<comment type="subcellular location">
    <subcellularLocation>
        <location evidence="1">Cytoplasm</location>
    </subcellularLocation>
    <text evidence="1">The tmRNA-SmpB complex associates with stalled 70S ribosomes.</text>
</comment>
<comment type="similarity">
    <text evidence="1">Belongs to the SmpB family.</text>
</comment>
<organism>
    <name type="scientific">Pasteurella multocida (strain Pm70)</name>
    <dbReference type="NCBI Taxonomy" id="272843"/>
    <lineage>
        <taxon>Bacteria</taxon>
        <taxon>Pseudomonadati</taxon>
        <taxon>Pseudomonadota</taxon>
        <taxon>Gammaproteobacteria</taxon>
        <taxon>Pasteurellales</taxon>
        <taxon>Pasteurellaceae</taxon>
        <taxon>Pasteurella</taxon>
    </lineage>
</organism>
<proteinExistence type="inferred from homology"/>
<dbReference type="EMBL" id="AE004439">
    <property type="protein sequence ID" value="AAK02301.1"/>
    <property type="molecule type" value="Genomic_DNA"/>
</dbReference>
<dbReference type="RefSeq" id="WP_005723605.1">
    <property type="nucleotide sequence ID" value="NC_002663.1"/>
</dbReference>
<dbReference type="SMR" id="P57827"/>
<dbReference type="STRING" id="272843.PM0217"/>
<dbReference type="EnsemblBacteria" id="AAK02301">
    <property type="protein sequence ID" value="AAK02301"/>
    <property type="gene ID" value="PM0217"/>
</dbReference>
<dbReference type="GeneID" id="77207566"/>
<dbReference type="KEGG" id="pmu:PM0217"/>
<dbReference type="PATRIC" id="fig|272843.6.peg.224"/>
<dbReference type="HOGENOM" id="CLU_108953_3_0_6"/>
<dbReference type="OrthoDB" id="9805462at2"/>
<dbReference type="Proteomes" id="UP000000809">
    <property type="component" value="Chromosome"/>
</dbReference>
<dbReference type="GO" id="GO:0005829">
    <property type="term" value="C:cytosol"/>
    <property type="evidence" value="ECO:0007669"/>
    <property type="project" value="TreeGrafter"/>
</dbReference>
<dbReference type="GO" id="GO:0003723">
    <property type="term" value="F:RNA binding"/>
    <property type="evidence" value="ECO:0007669"/>
    <property type="project" value="UniProtKB-UniRule"/>
</dbReference>
<dbReference type="GO" id="GO:0070929">
    <property type="term" value="P:trans-translation"/>
    <property type="evidence" value="ECO:0007669"/>
    <property type="project" value="UniProtKB-UniRule"/>
</dbReference>
<dbReference type="CDD" id="cd09294">
    <property type="entry name" value="SmpB"/>
    <property type="match status" value="1"/>
</dbReference>
<dbReference type="Gene3D" id="2.40.280.10">
    <property type="match status" value="1"/>
</dbReference>
<dbReference type="HAMAP" id="MF_00023">
    <property type="entry name" value="SmpB"/>
    <property type="match status" value="1"/>
</dbReference>
<dbReference type="InterPro" id="IPR023620">
    <property type="entry name" value="SmpB"/>
</dbReference>
<dbReference type="InterPro" id="IPR000037">
    <property type="entry name" value="SsrA-bd_prot"/>
</dbReference>
<dbReference type="InterPro" id="IPR020081">
    <property type="entry name" value="SsrA-bd_prot_CS"/>
</dbReference>
<dbReference type="NCBIfam" id="NF003843">
    <property type="entry name" value="PRK05422.1"/>
    <property type="match status" value="1"/>
</dbReference>
<dbReference type="NCBIfam" id="TIGR00086">
    <property type="entry name" value="smpB"/>
    <property type="match status" value="1"/>
</dbReference>
<dbReference type="PANTHER" id="PTHR30308:SF2">
    <property type="entry name" value="SSRA-BINDING PROTEIN"/>
    <property type="match status" value="1"/>
</dbReference>
<dbReference type="PANTHER" id="PTHR30308">
    <property type="entry name" value="TMRNA-BINDING COMPONENT OF TRANS-TRANSLATION TAGGING COMPLEX"/>
    <property type="match status" value="1"/>
</dbReference>
<dbReference type="Pfam" id="PF01668">
    <property type="entry name" value="SmpB"/>
    <property type="match status" value="1"/>
</dbReference>
<dbReference type="SUPFAM" id="SSF74982">
    <property type="entry name" value="Small protein B (SmpB)"/>
    <property type="match status" value="1"/>
</dbReference>
<dbReference type="PROSITE" id="PS01317">
    <property type="entry name" value="SSRP"/>
    <property type="match status" value="1"/>
</dbReference>
<sequence length="160" mass="18267">MTKKKVKVGTNTIALNKRARHDYFIEDEMEAGLELQGWEVKSMRAGKANISDSYIIFKQGEAYLFGATIQPLNVASTHIVCDPTRTRKLLLKQKELASLFGKANRDGYTIVALSLYWKGAWAKLKIGLAKGKKQHDKREDIKEREWKVTKDRIMKNARLG</sequence>
<keyword id="KW-0963">Cytoplasm</keyword>
<keyword id="KW-1185">Reference proteome</keyword>
<keyword id="KW-0694">RNA-binding</keyword>
<evidence type="ECO:0000255" key="1">
    <source>
        <dbReference type="HAMAP-Rule" id="MF_00023"/>
    </source>
</evidence>
<accession>P57827</accession>
<reference key="1">
    <citation type="journal article" date="2001" name="Proc. Natl. Acad. Sci. U.S.A.">
        <title>Complete genomic sequence of Pasteurella multocida Pm70.</title>
        <authorList>
            <person name="May B.J."/>
            <person name="Zhang Q."/>
            <person name="Li L.L."/>
            <person name="Paustian M.L."/>
            <person name="Whittam T.S."/>
            <person name="Kapur V."/>
        </authorList>
    </citation>
    <scope>NUCLEOTIDE SEQUENCE [LARGE SCALE GENOMIC DNA]</scope>
    <source>
        <strain>Pm70</strain>
    </source>
</reference>